<feature type="initiator methionine" description="Removed" evidence="7 10">
    <location>
        <position position="1"/>
    </location>
</feature>
<feature type="chain" id="PRO_0000199050" description="Replication restart protein PriB">
    <location>
        <begin position="2"/>
        <end position="104"/>
    </location>
</feature>
<feature type="domain" description="SSB" evidence="1">
    <location>
        <begin position="2"/>
        <end position="101"/>
    </location>
</feature>
<feature type="short sequence motif" description="L45 loop" evidence="8">
    <location>
        <begin position="82"/>
        <end position="89"/>
    </location>
</feature>
<feature type="disulfide bond" description="Interchain" evidence="4 5 27 28 30 32">
    <location>
        <begin position="48"/>
        <end position="80"/>
    </location>
</feature>
<feature type="mutagenesis site" description="No change in ssDNA binding, decreased displacement of PriB from ssDNA by DnaT fragment, greatly decreased binding to DnaT fragment (residues 1-88). Complements a priB deletion in a priA300 mutant in vivo." evidence="15 16">
    <original>S</original>
    <variation>A</variation>
    <location>
        <position position="20"/>
    </location>
</feature>
<feature type="mutagenesis site" description="No change in ssDNA binding, decreased displacement of PriB from ssDNA by DnaT fragment, greatly decreased binding to DnaT fragment (residues 1-88). Does not complement a priB deletion in a priA300 mutant in vivo." evidence="15 16">
    <original>H</original>
    <variation>A</variation>
    <location>
        <position position="26"/>
    </location>
</feature>
<feature type="mutagenesis site" description="No longer interacts with PriA, still dimerizes and binds ssDNA, altered binding to DnaT, does not load DnaB replicative helicase. Does not fully complement a priB deletion in a priA300 mutant in vivo." evidence="9">
    <original>E</original>
    <variation>A</variation>
    <location>
        <position position="39"/>
    </location>
</feature>
<feature type="mutagenesis site" description="No longer interacts with PriA, still dimerizes and binds ssDNA, altered binding to DnaT, does not load DnaB replicative helicase. Does not complement a priB deletion in a priA300 mutant in vivo. Nearly complete loss of PriB stimulation of PriA helicase activity." evidence="9 19">
    <original>R</original>
    <variation>A</variation>
    <location>
        <position position="44"/>
    </location>
</feature>
<feature type="mutagenesis site" description="Increased binding to DnaT, loads DnaB replicative helicase." evidence="9">
    <original>Q</original>
    <variation>A</variation>
    <location>
        <position position="45"/>
    </location>
</feature>
<feature type="mutagenesis site" description="Slight decrease in ssDNA-binding. Somewhat reduced PriA binding, does not stimulate PriA helicase, significantly reduced binding to DnaT and ssDNA, does not load DnaB replicative helicase; when associated with A-82." evidence="6 8 9">
    <original>W</original>
    <variation>A</variation>
    <location>
        <position position="47"/>
    </location>
</feature>
<feature type="mutagenesis site" description="No change in ssDNA binding, increased displacement of PriB from ssDNA by DnaT fragment, increased binding to DnaT fragment (residues 1-88). Complements a priB deletion in a priA300 mutant in vivo." evidence="15 16">
    <original>S</original>
    <variation>A</variation>
    <location>
        <position position="55"/>
    </location>
</feature>
<feature type="mutagenesis site" description="60-fold decreased binding of ssDNA." evidence="8">
    <original>KAKNGLSK</original>
    <variation>AAANGLSA</variation>
    <location>
        <begin position="82"/>
        <end position="89"/>
    </location>
</feature>
<feature type="mutagenesis site" description="5-fold decrease in ssDNA-binding. Somewhat reduced PriA binding, does not stimulate PriA helicase, significantly reduced binding to DnaT and ssDNA, does not load DnaB replicative helicase; when associated with A-47." evidence="6 8 9">
    <original>K</original>
    <variation>A</variation>
    <location>
        <position position="82"/>
    </location>
</feature>
<feature type="strand" evidence="34">
    <location>
        <begin position="3"/>
        <end position="20"/>
    </location>
</feature>
<feature type="turn" evidence="34">
    <location>
        <begin position="21"/>
        <end position="23"/>
    </location>
</feature>
<feature type="strand" evidence="34">
    <location>
        <begin position="24"/>
        <end position="39"/>
    </location>
</feature>
<feature type="strand" evidence="34">
    <location>
        <begin position="42"/>
        <end position="57"/>
    </location>
</feature>
<feature type="helix" evidence="34">
    <location>
        <begin position="60"/>
        <end position="64"/>
    </location>
</feature>
<feature type="strand" evidence="34">
    <location>
        <begin position="71"/>
        <end position="76"/>
    </location>
</feature>
<feature type="strand" evidence="34">
    <location>
        <begin position="84"/>
        <end position="86"/>
    </location>
</feature>
<feature type="strand" evidence="34">
    <location>
        <begin position="91"/>
        <end position="93"/>
    </location>
</feature>
<feature type="strand" evidence="34">
    <location>
        <begin position="95"/>
        <end position="99"/>
    </location>
</feature>
<comment type="function">
    <text evidence="3 4 6 7 8 10 12 13 17 19 21 22 23 24">Involved in the restart of stalled replication forks, which reloads the replicative helicase (DnaB) on sites other than the origin of replication; the PriA-PriB pathway is the major replication restart pathway (PubMed:11532137, PubMed:37169801, PubMed:22636770). There are several restart pathways, the PriA-PriB pathway is subdivided into 2 distinct pathways (PubMed:34423481). priB and priC have redundant roles in the cell (PubMed:10540288). During primosome assembly it facilitates complex formation between PriA and DnaT on DNA; stabilizes PriA on DNA, presumably by preventing or inhibiting PriA DNA translocation activity (PubMed:8663104, PubMed:8663105, PubMed:8663106). Forms a branched DNA-PriA-PriB complex when the lagging strand is single-stranded (ss)DNA (PubMed:16188886). Binds ssDNA in the presence and absence of ssDNA DNA-binding protein (SSB), does not bind branched structures (PubMed:8366072, PubMed:16188886). DNA binding, forming spiral filaments on ssDNA, is cooperative (PubMed:16899446). Stimulates the helicase activity of PriA (PubMed:16188886, PubMed:37169801, PubMed:34423481). The homodimer binds 12 nucleotides of ssDNA (PubMed:20156448). Binds homo-pyrimidine tracts better than homo-purine tracts (PubMed:15383524, PubMed:20156448).</text>
</comment>
<comment type="function">
    <text evidence="18">Genetic interactions among priB, dam, lexA, nagC, polA, rdgB, rdgB, rep and uup link the PriA-PriB replication restart pathway to DNA double-strand break repair.</text>
</comment>
<comment type="subunit">
    <text evidence="1 4 5 8 9 12 14 15 19 20 21 22 23 24">Homodimer (PubMed:20156448, PubMed:15383524, PubMed:15530361, PubMed:16899446, PubMed:17588514, PubMed:30659961, PubMed:37169801). Primosome assembly occurs via a 'hand-off' mechanism. PriA binds to replication forks, subsequently PriB then DnaT bind; DnaT then displaces ssDNA to generate the helicase loading substrate, which allows DnaC to load helicase DnaB onto the fork (PubMed:8663104, PubMed:8663105, PubMed:8663106, PubMed:17588514, PubMed:25265331, PubMed:30659961). ssDNA is displaced from the PriB-ssDNA complex by DnaT (PubMed:25265331, PubMed:30659961). In a PriA-PriB-replication fork structure, movement of the PriA CRR domain exposes a surface to which PriB binds and contacts ssDNA emerging from the PriA pore (PubMed:37169801). Binds PriA; binding is improved in the presence of ssDNA (PubMed:8663106, PubMed:17588514, PubMed:37169801). Weakly binds DnaT; binding is improved in the presence of ssDNA; as DnaT levels increase PriB dissociates from ssDNA (PubMed:17588514, PubMed:25265331, PubMed:30659961). Component of the replication restart primosome, which is composed of PriA, PriB, PriC, DnaB and DnaT; DnaG primase associates transiently with this complex (PubMed:6454139, PubMed:8366072, PubMed:8663104, PubMed:8663105, PubMed:17588514). Component of the preprimosomal complex composed of one monomer of PriC and DnaT, two monomers of PriA, two dimers of PriB and one hexamer of DnaB (PubMed:8663105).</text>
</comment>
<comment type="interaction">
    <interactant intactId="EBI-1125223">
        <id>P07013</id>
    </interactant>
    <interactant intactId="EBI-549621">
        <id>P0A8J2</id>
        <label>dnaT</label>
    </interactant>
    <organismsDiffer>false</organismsDiffer>
    <experiments>4</experiments>
</comment>
<comment type="interaction">
    <interactant intactId="EBI-1125223">
        <id>P07013</id>
    </interactant>
    <interactant intactId="EBI-552050">
        <id>P17888</id>
        <label>priA</label>
    </interactant>
    <organismsDiffer>false</organismsDiffer>
    <experiments>3</experiments>
</comment>
<comment type="interaction">
    <interactant intactId="EBI-1125223">
        <id>P07013</id>
    </interactant>
    <interactant intactId="EBI-1125223">
        <id>P07013</id>
        <label>priB</label>
    </interactant>
    <organismsDiffer>false</organismsDiffer>
    <experiments>4</experiments>
</comment>
<comment type="induction">
    <text evidence="11">Induced by hydroxyurea.</text>
</comment>
<comment type="domain">
    <text evidence="4 5 8 9">Displays high structural similarity to the ssDNA-binding domains of single-stranded binding protein (SSB) (PubMed:15383524, PubMed:15530361). Unlike SSB binds ssDNA in a shallow groove on its surface where DNA contacts both monomers (PubMed:16899446). The L45 loop (residues 82-89) plays a significant role in ssDNA binding (PubMed:16899446). PriB's binding sites for PriA, DnaT and ssDNA overlap on the surface of PriB (PubMed:17588514).</text>
</comment>
<comment type="PTM">
    <text evidence="4 5 28 29 30 32">An intersubunit disulfide bond is seen in some crystals (PubMed:15383524, PubMed:15530361).</text>
</comment>
<comment type="disruption phenotype">
    <text evidence="2 3 13 18">Called priB302; no growth phenotype, 2-fold decrease in recombination proficiency (PubMed:10540288, PubMed:11532137, PubMed:22636770). Inviable at 10 ng/ml ciprofloxacin (PubMed:36326440). Resumption of DNA synthesis after arrest of DNA replication (upon UV treatment) is slower than wild-type, no change in survival after UV treatment (PubMed:22636770). A double priB-priC deletion causes a drastic reduction in cell growth and/or viability (PubMed:10540288). Strongly reduced UV resistance and greatly increased SOS induction; when associated with 'R-230', 'Y-479' or to a lesser extent 'P-557' in priA (PubMed:11532137). Synthetically lethal in combination with a polA, priC, rep or lexA deletion (PubMed:36326440). Double deletions with dam, nagC, rdgB, rdgC or uup are seriously disadvantageous to cells (PubMed:36326440).</text>
</comment>
<comment type="similarity">
    <text evidence="1">Belongs to the PriB family.</text>
</comment>
<keyword id="KW-0002">3D-structure</keyword>
<keyword id="KW-0903">Direct protein sequencing</keyword>
<keyword id="KW-1015">Disulfide bond</keyword>
<keyword id="KW-0235">DNA replication</keyword>
<keyword id="KW-0238">DNA-binding</keyword>
<keyword id="KW-0639">Primosome</keyword>
<keyword id="KW-1185">Reference proteome</keyword>
<keyword id="KW-0694">RNA-binding</keyword>
<protein>
    <recommendedName>
        <fullName evidence="1">Replication restart protein PriB</fullName>
    </recommendedName>
    <alternativeName>
        <fullName evidence="25 26">Primosomal replication protein n</fullName>
    </alternativeName>
</protein>
<proteinExistence type="evidence at protein level"/>
<evidence type="ECO:0000255" key="1">
    <source>
        <dbReference type="HAMAP-Rule" id="MF_00720"/>
    </source>
</evidence>
<evidence type="ECO:0000269" key="2">
    <source>
    </source>
</evidence>
<evidence type="ECO:0000269" key="3">
    <source>
    </source>
</evidence>
<evidence type="ECO:0000269" key="4">
    <source>
    </source>
</evidence>
<evidence type="ECO:0000269" key="5">
    <source>
    </source>
</evidence>
<evidence type="ECO:0000269" key="6">
    <source>
    </source>
</evidence>
<evidence type="ECO:0000269" key="7">
    <source>
    </source>
</evidence>
<evidence type="ECO:0000269" key="8">
    <source>
    </source>
</evidence>
<evidence type="ECO:0000269" key="9">
    <source>
    </source>
</evidence>
<evidence type="ECO:0000269" key="10">
    <source>
    </source>
</evidence>
<evidence type="ECO:0000269" key="11">
    <source>
    </source>
</evidence>
<evidence type="ECO:0000269" key="12">
    <source>
    </source>
</evidence>
<evidence type="ECO:0000269" key="13">
    <source>
    </source>
</evidence>
<evidence type="ECO:0000269" key="14">
    <source>
    </source>
</evidence>
<evidence type="ECO:0000269" key="15">
    <source>
    </source>
</evidence>
<evidence type="ECO:0000269" key="16">
    <source>
    </source>
</evidence>
<evidence type="ECO:0000269" key="17">
    <source>
    </source>
</evidence>
<evidence type="ECO:0000269" key="18">
    <source>
    </source>
</evidence>
<evidence type="ECO:0000269" key="19">
    <source>
    </source>
</evidence>
<evidence type="ECO:0000269" key="20">
    <source>
    </source>
</evidence>
<evidence type="ECO:0000269" key="21">
    <source>
    </source>
</evidence>
<evidence type="ECO:0000269" key="22">
    <source>
    </source>
</evidence>
<evidence type="ECO:0000269" key="23">
    <source>
    </source>
</evidence>
<evidence type="ECO:0000269" key="24">
    <source>
    </source>
</evidence>
<evidence type="ECO:0000303" key="25">
    <source>
    </source>
</evidence>
<evidence type="ECO:0000303" key="26">
    <source>
    </source>
</evidence>
<evidence type="ECO:0000312" key="27">
    <source>
        <dbReference type="PDB" id="1V1Q"/>
    </source>
</evidence>
<evidence type="ECO:0007744" key="28">
    <source>
        <dbReference type="PDB" id="1TXY"/>
    </source>
</evidence>
<evidence type="ECO:0007744" key="29">
    <source>
        <dbReference type="PDB" id="1V1Q"/>
    </source>
</evidence>
<evidence type="ECO:0007744" key="30">
    <source>
        <dbReference type="PDB" id="2CCZ"/>
    </source>
</evidence>
<evidence type="ECO:0007744" key="31">
    <source>
        <dbReference type="PDB" id="2PNH"/>
    </source>
</evidence>
<evidence type="ECO:0007744" key="32">
    <source>
        <dbReference type="PDB" id="5WQV"/>
    </source>
</evidence>
<evidence type="ECO:0007744" key="33">
    <source>
        <dbReference type="PDB" id="8FAK"/>
    </source>
</evidence>
<evidence type="ECO:0007829" key="34">
    <source>
        <dbReference type="PDB" id="2CCZ"/>
    </source>
</evidence>
<organism>
    <name type="scientific">Escherichia coli (strain K12)</name>
    <dbReference type="NCBI Taxonomy" id="83333"/>
    <lineage>
        <taxon>Bacteria</taxon>
        <taxon>Pseudomonadati</taxon>
        <taxon>Pseudomonadota</taxon>
        <taxon>Gammaproteobacteria</taxon>
        <taxon>Enterobacterales</taxon>
        <taxon>Enterobacteriaceae</taxon>
        <taxon>Escherichia</taxon>
    </lineage>
</organism>
<gene>
    <name evidence="1 25" type="primary">priB</name>
    <name type="ordered locus">b4201</name>
    <name type="ordered locus">JW4159</name>
</gene>
<accession>P07013</accession>
<accession>Q2M6A4</accession>
<sequence length="104" mass="11442">MTNRLVLSGTVCRAPLRKVSPSGIPHCQFVLEHRSVQEEAGFHRQAWCQMPVIVSGHENQAITHSITVGSRITVQGFISCHKAKNGLSKMVLHAEQIELIDSGD</sequence>
<dbReference type="EMBL" id="X04022">
    <property type="protein sequence ID" value="CAA27653.1"/>
    <property type="molecule type" value="Genomic_DNA"/>
</dbReference>
<dbReference type="EMBL" id="U14003">
    <property type="protein sequence ID" value="AAA97097.1"/>
    <property type="molecule type" value="Genomic_DNA"/>
</dbReference>
<dbReference type="EMBL" id="U00096">
    <property type="protein sequence ID" value="AAC77158.1"/>
    <property type="molecule type" value="Genomic_DNA"/>
</dbReference>
<dbReference type="EMBL" id="AP009048">
    <property type="protein sequence ID" value="BAE78202.1"/>
    <property type="molecule type" value="Genomic_DNA"/>
</dbReference>
<dbReference type="PIR" id="A30281">
    <property type="entry name" value="Q4ECFR"/>
</dbReference>
<dbReference type="RefSeq" id="NP_418622.1">
    <property type="nucleotide sequence ID" value="NC_000913.3"/>
</dbReference>
<dbReference type="RefSeq" id="WP_001315977.1">
    <property type="nucleotide sequence ID" value="NZ_LN832404.1"/>
</dbReference>
<dbReference type="PDB" id="1TXY">
    <property type="method" value="X-ray"/>
    <property type="resolution" value="2.00 A"/>
    <property type="chains" value="A/B=1-104"/>
</dbReference>
<dbReference type="PDB" id="1V1Q">
    <property type="method" value="X-ray"/>
    <property type="resolution" value="2.10 A"/>
    <property type="chains" value="A/B=1-102"/>
</dbReference>
<dbReference type="PDB" id="1WOC">
    <property type="method" value="X-ray"/>
    <property type="resolution" value="2.00 A"/>
    <property type="chains" value="A/B/C/D=2-104"/>
</dbReference>
<dbReference type="PDB" id="2CCZ">
    <property type="method" value="X-ray"/>
    <property type="resolution" value="2.70 A"/>
    <property type="chains" value="A/B=1-102"/>
</dbReference>
<dbReference type="PDB" id="2PNH">
    <property type="method" value="X-ray"/>
    <property type="resolution" value="2.25 A"/>
    <property type="chains" value="A/B=1-104"/>
</dbReference>
<dbReference type="PDB" id="5WQV">
    <property type="method" value="X-ray"/>
    <property type="resolution" value="1.97 A"/>
    <property type="chains" value="A/B=1-104"/>
</dbReference>
<dbReference type="PDB" id="8FAK">
    <property type="method" value="EM"/>
    <property type="resolution" value="3.22 A"/>
    <property type="chains" value="A/B=1-104"/>
</dbReference>
<dbReference type="PDBsum" id="1TXY"/>
<dbReference type="PDBsum" id="1V1Q"/>
<dbReference type="PDBsum" id="1WOC"/>
<dbReference type="PDBsum" id="2CCZ"/>
<dbReference type="PDBsum" id="2PNH"/>
<dbReference type="PDBsum" id="5WQV"/>
<dbReference type="PDBsum" id="8FAK"/>
<dbReference type="EMDB" id="EMD-28959"/>
<dbReference type="SMR" id="P07013"/>
<dbReference type="BioGRID" id="4259640">
    <property type="interactions" value="14"/>
</dbReference>
<dbReference type="ComplexPortal" id="CPX-1951">
    <property type="entry name" value="Replication restart pre-primosome complex, priAB variant"/>
</dbReference>
<dbReference type="ComplexPortal" id="CPX-5910">
    <property type="entry name" value="Replication restart primosome complex, priAB variant"/>
</dbReference>
<dbReference type="DIP" id="DIP-10563N"/>
<dbReference type="FunCoup" id="P07013">
    <property type="interactions" value="97"/>
</dbReference>
<dbReference type="IntAct" id="P07013">
    <property type="interactions" value="12"/>
</dbReference>
<dbReference type="MINT" id="P07013"/>
<dbReference type="STRING" id="511145.b4201"/>
<dbReference type="jPOST" id="P07013"/>
<dbReference type="PaxDb" id="511145-b4201"/>
<dbReference type="EnsemblBacteria" id="AAC77158">
    <property type="protein sequence ID" value="AAC77158"/>
    <property type="gene ID" value="b4201"/>
</dbReference>
<dbReference type="GeneID" id="948722"/>
<dbReference type="KEGG" id="ecj:JW4159"/>
<dbReference type="KEGG" id="eco:b4201"/>
<dbReference type="PATRIC" id="fig|1411691.4.peg.2500"/>
<dbReference type="EchoBASE" id="EB0757"/>
<dbReference type="eggNOG" id="COG2965">
    <property type="taxonomic scope" value="Bacteria"/>
</dbReference>
<dbReference type="HOGENOM" id="CLU_166075_0_0_6"/>
<dbReference type="InParanoid" id="P07013"/>
<dbReference type="OMA" id="CQMPVII"/>
<dbReference type="PhylomeDB" id="P07013"/>
<dbReference type="BioCyc" id="EcoCyc:EG10764-MONOMER"/>
<dbReference type="BioCyc" id="MetaCyc:EG10764-MONOMER"/>
<dbReference type="EvolutionaryTrace" id="P07013"/>
<dbReference type="PRO" id="PR:P07013"/>
<dbReference type="Proteomes" id="UP000000625">
    <property type="component" value="Chromosome"/>
</dbReference>
<dbReference type="GO" id="GO:1990158">
    <property type="term" value="C:DnaB-DnaC-DnaT-PriA-PriB complex"/>
    <property type="evidence" value="ECO:0000303"/>
    <property type="project" value="ComplexPortal"/>
</dbReference>
<dbReference type="GO" id="GO:1990099">
    <property type="term" value="C:pre-primosome complex"/>
    <property type="evidence" value="ECO:0000315"/>
    <property type="project" value="UniProtKB"/>
</dbReference>
<dbReference type="GO" id="GO:1990077">
    <property type="term" value="C:primosome complex"/>
    <property type="evidence" value="ECO:0000303"/>
    <property type="project" value="ComplexPortal"/>
</dbReference>
<dbReference type="GO" id="GO:0042802">
    <property type="term" value="F:identical protein binding"/>
    <property type="evidence" value="ECO:0000353"/>
    <property type="project" value="IntAct"/>
</dbReference>
<dbReference type="GO" id="GO:0003697">
    <property type="term" value="F:single-stranded DNA binding"/>
    <property type="evidence" value="ECO:0000314"/>
    <property type="project" value="EcoCyc"/>
</dbReference>
<dbReference type="GO" id="GO:0006270">
    <property type="term" value="P:DNA replication initiation"/>
    <property type="evidence" value="ECO:0000315"/>
    <property type="project" value="EcoCyc"/>
</dbReference>
<dbReference type="GO" id="GO:0006269">
    <property type="term" value="P:DNA replication, synthesis of primer"/>
    <property type="evidence" value="ECO:0000303"/>
    <property type="project" value="ComplexPortal"/>
</dbReference>
<dbReference type="GO" id="GO:0006276">
    <property type="term" value="P:plasmid maintenance"/>
    <property type="evidence" value="ECO:0000315"/>
    <property type="project" value="EcoCyc"/>
</dbReference>
<dbReference type="GO" id="GO:0031297">
    <property type="term" value="P:replication fork processing"/>
    <property type="evidence" value="ECO:0000303"/>
    <property type="project" value="ComplexPortal"/>
</dbReference>
<dbReference type="GO" id="GO:0009314">
    <property type="term" value="P:response to radiation"/>
    <property type="evidence" value="ECO:0000315"/>
    <property type="project" value="EcoCyc"/>
</dbReference>
<dbReference type="CDD" id="cd04496">
    <property type="entry name" value="SSB_OBF"/>
    <property type="match status" value="1"/>
</dbReference>
<dbReference type="FunFam" id="2.40.50.140:FF:000077">
    <property type="entry name" value="Primosomal replication protein N"/>
    <property type="match status" value="1"/>
</dbReference>
<dbReference type="Gene3D" id="2.40.50.140">
    <property type="entry name" value="Nucleic acid-binding proteins"/>
    <property type="match status" value="1"/>
</dbReference>
<dbReference type="HAMAP" id="MF_00720">
    <property type="entry name" value="PriB"/>
    <property type="match status" value="1"/>
</dbReference>
<dbReference type="InterPro" id="IPR012340">
    <property type="entry name" value="NA-bd_OB-fold"/>
</dbReference>
<dbReference type="InterPro" id="IPR000424">
    <property type="entry name" value="Primosome_PriB/ssb"/>
</dbReference>
<dbReference type="InterPro" id="IPR023646">
    <property type="entry name" value="Prisomal_replication_PriB"/>
</dbReference>
<dbReference type="NCBIfam" id="TIGR04418">
    <property type="entry name" value="PriB_gamma"/>
    <property type="match status" value="1"/>
</dbReference>
<dbReference type="Pfam" id="PF22657">
    <property type="entry name" value="SSB_1"/>
    <property type="match status" value="1"/>
</dbReference>
<dbReference type="PIRSF" id="PIRSF003135">
    <property type="entry name" value="Primosomal_n"/>
    <property type="match status" value="1"/>
</dbReference>
<dbReference type="SUPFAM" id="SSF50249">
    <property type="entry name" value="Nucleic acid-binding proteins"/>
    <property type="match status" value="1"/>
</dbReference>
<dbReference type="PROSITE" id="PS50935">
    <property type="entry name" value="SSB"/>
    <property type="match status" value="1"/>
</dbReference>
<name>PRIB_ECOLI</name>
<reference key="1">
    <citation type="journal article" date="1986" name="Mol. Gen. Genet.">
        <title>The nucleotide sequence of an Escherichia coli chromosomal region containing the genes for ribosomal proteins S6, S18, L9 and an open reading frame.</title>
        <authorList>
            <person name="Schnier J."/>
            <person name="Kitakawa M."/>
            <person name="Isono K."/>
        </authorList>
    </citation>
    <scope>NUCLEOTIDE SEQUENCE [GENOMIC DNA]</scope>
</reference>
<reference key="2">
    <citation type="journal article" date="1995" name="Nucleic Acids Res.">
        <title>Analysis of the Escherichia coli genome VI: DNA sequence of the region from 92.8 through 100 minutes.</title>
        <authorList>
            <person name="Burland V.D."/>
            <person name="Plunkett G. III"/>
            <person name="Sofia H.J."/>
            <person name="Daniels D.L."/>
            <person name="Blattner F.R."/>
        </authorList>
    </citation>
    <scope>NUCLEOTIDE SEQUENCE [LARGE SCALE GENOMIC DNA]</scope>
    <source>
        <strain>K12 / MG1655 / ATCC 47076</strain>
    </source>
</reference>
<reference key="3">
    <citation type="journal article" date="1997" name="Science">
        <title>The complete genome sequence of Escherichia coli K-12.</title>
        <authorList>
            <person name="Blattner F.R."/>
            <person name="Plunkett G. III"/>
            <person name="Bloch C.A."/>
            <person name="Perna N.T."/>
            <person name="Burland V."/>
            <person name="Riley M."/>
            <person name="Collado-Vides J."/>
            <person name="Glasner J.D."/>
            <person name="Rode C.K."/>
            <person name="Mayhew G.F."/>
            <person name="Gregor J."/>
            <person name="Davis N.W."/>
            <person name="Kirkpatrick H.A."/>
            <person name="Goeden M.A."/>
            <person name="Rose D.J."/>
            <person name="Mau B."/>
            <person name="Shao Y."/>
        </authorList>
    </citation>
    <scope>NUCLEOTIDE SEQUENCE [LARGE SCALE GENOMIC DNA]</scope>
    <source>
        <strain>K12 / MG1655 / ATCC 47076</strain>
    </source>
</reference>
<reference key="4">
    <citation type="journal article" date="2006" name="Mol. Syst. Biol.">
        <title>Highly accurate genome sequences of Escherichia coli K-12 strains MG1655 and W3110.</title>
        <authorList>
            <person name="Hayashi K."/>
            <person name="Morooka N."/>
            <person name="Yamamoto Y."/>
            <person name="Fujita K."/>
            <person name="Isono K."/>
            <person name="Choi S."/>
            <person name="Ohtsubo E."/>
            <person name="Baba T."/>
            <person name="Wanner B.L."/>
            <person name="Mori H."/>
            <person name="Horiuchi T."/>
        </authorList>
    </citation>
    <scope>NUCLEOTIDE SEQUENCE [LARGE SCALE GENOMIC DNA]</scope>
    <source>
        <strain>K12 / W3110 / ATCC 27325 / DSM 5911</strain>
    </source>
</reference>
<reference key="5">
    <citation type="journal article" date="1991" name="J. Biol. Chem.">
        <title>The priB and priC replication proteins of Escherichia coli. Genes, DNA sequence, overexpression, and purification.</title>
        <authorList>
            <person name="Zavitz K.H."/>
            <person name="Digate R.J."/>
            <person name="Marians K.J."/>
        </authorList>
    </citation>
    <scope>PROTEIN SEQUENCE OF 2-28</scope>
    <scope>FUNCTION</scope>
    <source>
        <strain>K12 / HSM83</strain>
    </source>
</reference>
<reference key="6">
    <citation type="journal article" date="1991" name="J. Biol. Chem.">
        <title>The priB gene encoding the primosomal replication n protein of Escherichia coli.</title>
        <authorList>
            <person name="Allen G.C. Jr."/>
            <person name="Kornberg A."/>
        </authorList>
    </citation>
    <scope>PROTEIN SEQUENCE OF 2-28</scope>
    <scope>FUNCTION</scope>
</reference>
<reference key="7">
    <citation type="journal article" date="1981" name="Proc. Natl. Acad. Sci. U.S.A.">
        <title>Unique primed start of phage phi X174 DNA replication and mobility of the primosome in a direction opposite chain synthesis.</title>
        <authorList>
            <person name="Arai K."/>
            <person name="Kornberg A."/>
        </authorList>
    </citation>
    <scope>PRIMOSOME SUBUNITS</scope>
</reference>
<reference key="8">
    <citation type="journal article" date="1993" name="J. Biol. Chem.">
        <title>Assembly of the primosome of DNA replication in Escherichia coli.</title>
        <authorList>
            <person name="Allen G.C. Jr."/>
            <person name="Kornberg A."/>
        </authorList>
    </citation>
    <scope>FUNCTION</scope>
    <scope>SUBUNIT</scope>
    <scope>DNA-BINDING</scope>
</reference>
<reference key="9">
    <citation type="journal article" date="1996" name="J. Biol. Chem.">
        <title>The ordered assembly of the phiX174-type primosome. I. Isolation and identification of intermediate protein-DNA complexes.</title>
        <authorList>
            <person name="Ng J.Y."/>
            <person name="Marians K.J."/>
        </authorList>
    </citation>
    <scope>FUNCTION</scope>
    <scope>PRIMOSOME COMPLEX ASSEMBLY</scope>
    <scope>SUBUNIT</scope>
</reference>
<reference key="10">
    <citation type="journal article" date="1996" name="J. Biol. Chem.">
        <title>The ordered assembly of the phiX174-type primosome. II. Preservation of primosome composition from assembly through replication.</title>
        <authorList>
            <person name="Ng J.Y."/>
            <person name="Marians K.J."/>
        </authorList>
    </citation>
    <scope>FUNCTION</scope>
    <scope>PRIMOSOME COMPLEX ASSEMBLY</scope>
    <scope>SUBUNIT</scope>
</reference>
<reference key="11">
    <citation type="journal article" date="1996" name="J. Biol. Chem.">
        <title>The ordered assembly of the phiX174-type primosome. III. PriB facilitates complex formation between PriA and DnaT.</title>
        <authorList>
            <person name="Liu J."/>
            <person name="Nurse P."/>
            <person name="Marians K.J."/>
        </authorList>
    </citation>
    <scope>FUNCTION</scope>
    <scope>SUBUNIT</scope>
    <scope>PRIMOSOME COMPLEX ASSEMBLY</scope>
</reference>
<reference key="12">
    <citation type="journal article" date="1999" name="Mol. Microbiol.">
        <title>dnaC mutations suppress defects in DNA replication- and recombination-associated functions in priB and priC double mutants in Escherichia coli K-12.</title>
        <authorList>
            <person name="Sandler S.J."/>
            <person name="Marians K.J."/>
            <person name="Zavitz K.H."/>
            <person name="Coutu J."/>
            <person name="Parent M.A."/>
            <person name="Clark A.J."/>
        </authorList>
    </citation>
    <scope>FUNCTION</scope>
    <scope>MULTIPLE REPLICATION RESTART PATHWAYS</scope>
    <scope>DISRUPTION PHENOTYPE</scope>
    <source>
        <strain>K12</strain>
    </source>
</reference>
<reference key="13">
    <citation type="journal article" date="2001" name="Mol. Microbiol.">
        <title>PriA mutations that affect PriA-PriC function during replication restart.</title>
        <authorList>
            <person name="Sandler S.J."/>
            <person name="McCool J.D."/>
            <person name="Do T.T."/>
            <person name="Johansen R.U."/>
        </authorList>
    </citation>
    <scope>MULTIPLE REPLICATION RESTART PATHWAYS</scope>
    <scope>DISRUPTION PHENOTYPE</scope>
    <source>
        <strain>K12</strain>
    </source>
</reference>
<reference key="14">
    <citation type="journal article" date="2005" name="J. Biol. Chem.">
        <title>PriB stimulates PriA helicase via an interaction with single-stranded DNA.</title>
        <authorList>
            <person name="Cadman C.J."/>
            <person name="Lopper M."/>
            <person name="Moon P.B."/>
            <person name="Keck J.L."/>
            <person name="McGlynn P."/>
        </authorList>
    </citation>
    <scope>FUNCTION</scope>
    <scope>PRIA-PRIB-DNA COMPLEX FORMATION</scope>
    <scope>DNA-BINDING</scope>
    <scope>MUTAGENESIS OF TRP-47 AND LYS-82</scope>
</reference>
<reference key="15">
    <citation type="journal article" date="2009" name="Mol. Cell">
        <title>Hydroxyurea induces hydroxyl radical-mediated cell death in Escherichia coli.</title>
        <authorList>
            <person name="Davies B.W."/>
            <person name="Kohanski M.A."/>
            <person name="Simmons L.A."/>
            <person name="Winkler J.A."/>
            <person name="Collins J.J."/>
            <person name="Walker G.C."/>
        </authorList>
    </citation>
    <scope>INDUCTION BY HYDROXYUREA</scope>
    <source>
        <strain>K12 / MC4100 / ATCC 35695 / DSM 6574</strain>
    </source>
</reference>
<reference key="16">
    <citation type="journal article" date="2010" name="J. Mol. Biol.">
        <title>Interactions of the Escherichia coli primosomal PriB protein with the single-stranded DNA. Stoichiometries, intrinsic affinities, cooperativities, and base specificities.</title>
        <authorList>
            <person name="Szymanski M.R."/>
            <person name="Jezewska M.J."/>
            <person name="Bujalowski W."/>
        </authorList>
    </citation>
    <scope>SUBUNIT</scope>
    <scope>DNA-BINDING</scope>
</reference>
<reference key="17">
    <citation type="journal article" date="2012" name="J. Bacteriol.">
        <title>Cellular characterization of the primosome and rep helicase in processing and restoration of replication following arrest by UV-induced DNA damage in Escherichia coli.</title>
        <authorList>
            <person name="Courcelle C.T."/>
            <person name="Landstrom A.J."/>
            <person name="Anderson B."/>
            <person name="Courcelle J."/>
        </authorList>
    </citation>
    <scope>FUNCTION</scope>
    <scope>DISRUPTION PHENOTYPE</scope>
    <source>
        <strain>K12 / W3110 / SR108</strain>
    </source>
</reference>
<reference key="18">
    <citation type="journal article" date="2014" name="FEBS J.">
        <title>Structure and mechanism of the primosome protein DnaT-functional structures for homotrimerization, dissociation of ssDNA from the PriB.ssDNA complex, and formation of the DnaT.ssDNA complex.</title>
        <authorList>
            <person name="Fujiyama S."/>
            <person name="Abe Y."/>
            <person name="Tani J."/>
            <person name="Urabe M."/>
            <person name="Sato K."/>
            <person name="Aramaki T."/>
            <person name="Katayama T."/>
            <person name="Ueda T."/>
        </authorList>
    </citation>
    <scope>SUBUNIT</scope>
    <scope>DNA-BINDING</scope>
</reference>
<reference key="19">
    <citation type="journal article" date="2021" name="FEBS Lett.">
        <title>A structural model of the PriB-DnaT complex in Escherichia coli replication restart.</title>
        <authorList>
            <person name="Abe Y."/>
            <person name="Ikeda Y."/>
            <person name="Fujiyama S."/>
            <person name="Kini R.M."/>
            <person name="Ueda T."/>
        </authorList>
    </citation>
    <scope>MUTAGENESIS OF SER-20; HIS-26 AND SER-55</scope>
</reference>
<reference key="20">
    <citation type="journal article" date="2021" name="Mol. Microbiol.">
        <title>Escherichia coli K-12 has two distinguishable PriA-PriB replication restart pathways.</title>
        <authorList>
            <person name="Sandler S.J."/>
            <person name="Leroux M."/>
            <person name="Windgassen T.A."/>
            <person name="Keck J.L."/>
        </authorList>
    </citation>
    <scope>FUNCTION</scope>
</reference>
<reference key="21">
    <citation type="journal article" date="2022" name="G3 (Bethesda)">
        <title>Identification of genetic interactions with priB links the PriA/PriB DNA replication restart pathway to double-strand DNA break repair in Escherichia coli.</title>
        <authorList>
            <person name="McKenzie A.M."/>
            <person name="Henry C."/>
            <person name="Myers K.S."/>
            <person name="Place M.M."/>
            <person name="Keck J.L."/>
        </authorList>
    </citation>
    <scope>GENETIC INTERACTION</scope>
    <scope>DISRUPTION PHENOTYPE</scope>
    <source>
        <strain>K12 / MG1655 / ATCC 47076</strain>
    </source>
</reference>
<reference evidence="29" key="22">
    <citation type="journal article" date="2004" name="J. Biol. Chem.">
        <title>Crystal structure of PriB, a primosomal DNA replication protein of Escherichia coli.</title>
        <authorList>
            <person name="Liu J.H."/>
            <person name="Chang T.W."/>
            <person name="Huang C.Y."/>
            <person name="Chen S.U."/>
            <person name="Wu H.N."/>
            <person name="Chang M.C."/>
            <person name="Hsiao C.D."/>
        </authorList>
    </citation>
    <scope>X-RAY CRYSTALLOGRAPHY (2.10 ANGSTROMS)</scope>
    <scope>SUBUNIT</scope>
    <scope>DOMAIN</scope>
    <scope>DISULFIDE BOND</scope>
    <scope>DNA-BINDING</scope>
    <scope>RNA-BINDING</scope>
    <source>
        <strain>K12</strain>
    </source>
</reference>
<reference evidence="28" key="23">
    <citation type="journal article" date="2004" name="Structure">
        <title>Crystal structure of PriB, a component of the Escherichia coli replication restart primosome.</title>
        <authorList>
            <person name="Lopper M."/>
            <person name="Holton J.M."/>
            <person name="Keck J.L."/>
        </authorList>
    </citation>
    <scope>X-RAY CRYSTALLOGRAPHY (2.00 ANGSTROMS)</scope>
    <scope>SUBUNIT</scope>
    <scope>DOMAIN</scope>
    <scope>DISULFIDE BOND</scope>
</reference>
<reference evidence="30" key="24">
    <citation type="journal article" date="2006" name="Nucleic Acids Res.">
        <title>Complexed crystal structure of replication restart primosome protein PriB reveals a novel single-stranded DNA-binding mode.</title>
        <authorList>
            <person name="Huang C.Y."/>
            <person name="Hsu C.H."/>
            <person name="Sun Y.J."/>
            <person name="Wu H.N."/>
            <person name="Hsiao C.D."/>
        </authorList>
    </citation>
    <scope>X-RAY CRYSTALLOGRAPHY (2.70 ANGSTROMS) IN COMPLEX WITH SSDNA</scope>
    <scope>FUNCTION</scope>
    <scope>SUBUNIT</scope>
    <scope>DOMAIN</scope>
    <scope>DNA-BINDING</scope>
    <scope>MUTAGENESIS OF TRP-47; LYS-82 AND 82-LYS--LYS-89</scope>
</reference>
<reference evidence="31" key="25">
    <citation type="journal article" date="2007" name="Mol. Cell">
        <title>A hand-off mechanism for primosome assembly in replication restart.</title>
        <authorList>
            <person name="Lopper M."/>
            <person name="Boonsombat R."/>
            <person name="Sandler S.J."/>
            <person name="Keck J.L."/>
        </authorList>
    </citation>
    <scope>X-RAY CRYSTALLOGRAPHY (2.25 ANGSTROMS)</scope>
    <scope>SUBUNIT</scope>
    <scope>DOMAIN</scope>
    <scope>SSDNA-BINDING</scope>
    <scope>MUTAGENESIS OF GLU-39; ARG-44; GLN-45; TRP-47 AND LYS-82</scope>
</reference>
<reference evidence="32" key="26">
    <citation type="journal article" date="2019" name="Biochim. Biophys. Acta">
        <title>Insight into the interaction between PriB and DnaT on bacterial DNA replication restart: Significance of the residues on PriB dimer interface and highly acidic region on DnaT.</title>
        <authorList>
            <person name="Fujiyama S."/>
            <person name="Abe Y."/>
            <person name="Shiroishi M."/>
            <person name="Ikeda Y."/>
            <person name="Ueda T."/>
        </authorList>
    </citation>
    <scope>X-RAY CRYSTALLOGRAPHY (1.97 ANGSTROMS)</scope>
    <scope>SUBUNIT</scope>
    <scope>INTERACTION WITH DNAT</scope>
    <scope>DNA-BINDING</scope>
    <scope>MUTAGENESIS OF SER-20; HIS-26 AND SER-55</scope>
</reference>
<reference evidence="33" key="27">
    <citation type="journal article" date="2023" name="Nat. Commun.">
        <title>Replication fork binding triggers structural changes in the PriA helicase that govern DNA replication restart in E. coli.</title>
        <authorList>
            <person name="Duckworth A.T."/>
            <person name="Ducos P.L."/>
            <person name="McMillan S.D."/>
            <person name="Satyshur K.A."/>
            <person name="Blumenthal K.H."/>
            <person name="Deorio H.R."/>
            <person name="Larson J.A."/>
            <person name="Sandler S.J."/>
            <person name="Grant T."/>
            <person name="Keck J.L."/>
        </authorList>
    </citation>
    <scope>STRUCTURE BY ELECTRON MICROSCOPY (3.22 ANGSTROMS) IN COMPLEX WITH PRIA AND REPLICATION FORK</scope>
    <scope>FUNCTION</scope>
    <scope>SUBUNIT</scope>
    <scope>DNA-BINDING</scope>
    <scope>MUTAGENESIS OF ARG-44</scope>
</reference>